<gene>
    <name type="primary">fixK</name>
    <name type="ordered locus">RA0667</name>
    <name type="ORF">SMa1225</name>
</gene>
<dbReference type="EMBL" id="X15079">
    <property type="protein sequence ID" value="CAA33183.1"/>
    <property type="molecule type" value="Genomic_DNA"/>
</dbReference>
<dbReference type="EMBL" id="Z21854">
    <property type="protein sequence ID" value="CAA79899.1"/>
    <property type="molecule type" value="Genomic_DNA"/>
</dbReference>
<dbReference type="EMBL" id="AE006469">
    <property type="protein sequence ID" value="AAK65325.1"/>
    <property type="molecule type" value="Genomic_DNA"/>
</dbReference>
<dbReference type="PIR" id="C95345">
    <property type="entry name" value="C95345"/>
</dbReference>
<dbReference type="PIR" id="S04122">
    <property type="entry name" value="S04122"/>
</dbReference>
<dbReference type="RefSeq" id="NP_435913.1">
    <property type="nucleotide sequence ID" value="NC_003037.1"/>
</dbReference>
<dbReference type="RefSeq" id="WP_010967646.1">
    <property type="nucleotide sequence ID" value="NC_003037.1"/>
</dbReference>
<dbReference type="SMR" id="P13295"/>
<dbReference type="EnsemblBacteria" id="AAK65325">
    <property type="protein sequence ID" value="AAK65325"/>
    <property type="gene ID" value="SMa1225"/>
</dbReference>
<dbReference type="KEGG" id="sme:SMa1225"/>
<dbReference type="PATRIC" id="fig|266834.11.peg.687"/>
<dbReference type="HOGENOM" id="CLU_075053_0_1_5"/>
<dbReference type="OrthoDB" id="667966at2"/>
<dbReference type="Proteomes" id="UP000001976">
    <property type="component" value="Plasmid pSymA"/>
</dbReference>
<dbReference type="GO" id="GO:0005829">
    <property type="term" value="C:cytosol"/>
    <property type="evidence" value="ECO:0007669"/>
    <property type="project" value="TreeGrafter"/>
</dbReference>
<dbReference type="GO" id="GO:0003677">
    <property type="term" value="F:DNA binding"/>
    <property type="evidence" value="ECO:0007669"/>
    <property type="project" value="UniProtKB-KW"/>
</dbReference>
<dbReference type="GO" id="GO:0003700">
    <property type="term" value="F:DNA-binding transcription factor activity"/>
    <property type="evidence" value="ECO:0007669"/>
    <property type="project" value="InterPro"/>
</dbReference>
<dbReference type="GO" id="GO:0009399">
    <property type="term" value="P:nitrogen fixation"/>
    <property type="evidence" value="ECO:0007669"/>
    <property type="project" value="UniProtKB-KW"/>
</dbReference>
<dbReference type="CDD" id="cd00038">
    <property type="entry name" value="CAP_ED"/>
    <property type="match status" value="1"/>
</dbReference>
<dbReference type="CDD" id="cd00092">
    <property type="entry name" value="HTH_CRP"/>
    <property type="match status" value="1"/>
</dbReference>
<dbReference type="FunFam" id="1.10.10.10:FF:000028">
    <property type="entry name" value="Fumarate/nitrate reduction transcriptional regulator Fnr"/>
    <property type="match status" value="1"/>
</dbReference>
<dbReference type="Gene3D" id="2.60.120.10">
    <property type="entry name" value="Jelly Rolls"/>
    <property type="match status" value="1"/>
</dbReference>
<dbReference type="Gene3D" id="1.10.10.10">
    <property type="entry name" value="Winged helix-like DNA-binding domain superfamily/Winged helix DNA-binding domain"/>
    <property type="match status" value="1"/>
</dbReference>
<dbReference type="InterPro" id="IPR000595">
    <property type="entry name" value="cNMP-bd_dom"/>
</dbReference>
<dbReference type="InterPro" id="IPR018490">
    <property type="entry name" value="cNMP-bd_dom_sf"/>
</dbReference>
<dbReference type="InterPro" id="IPR050397">
    <property type="entry name" value="Env_Response_Regulators"/>
</dbReference>
<dbReference type="InterPro" id="IPR012318">
    <property type="entry name" value="HTH_CRP"/>
</dbReference>
<dbReference type="InterPro" id="IPR014710">
    <property type="entry name" value="RmlC-like_jellyroll"/>
</dbReference>
<dbReference type="InterPro" id="IPR018335">
    <property type="entry name" value="Tscrpt_reg_HTH_Crp-type_CS"/>
</dbReference>
<dbReference type="InterPro" id="IPR036388">
    <property type="entry name" value="WH-like_DNA-bd_sf"/>
</dbReference>
<dbReference type="InterPro" id="IPR036390">
    <property type="entry name" value="WH_DNA-bd_sf"/>
</dbReference>
<dbReference type="PANTHER" id="PTHR24567">
    <property type="entry name" value="CRP FAMILY TRANSCRIPTIONAL REGULATORY PROTEIN"/>
    <property type="match status" value="1"/>
</dbReference>
<dbReference type="PANTHER" id="PTHR24567:SF75">
    <property type="entry name" value="FUMARATE AND NITRATE REDUCTION REGULATORY PROTEIN"/>
    <property type="match status" value="1"/>
</dbReference>
<dbReference type="Pfam" id="PF00027">
    <property type="entry name" value="cNMP_binding"/>
    <property type="match status" value="1"/>
</dbReference>
<dbReference type="Pfam" id="PF13545">
    <property type="entry name" value="HTH_Crp_2"/>
    <property type="match status" value="1"/>
</dbReference>
<dbReference type="PRINTS" id="PR00034">
    <property type="entry name" value="HTHCRP"/>
</dbReference>
<dbReference type="SMART" id="SM00100">
    <property type="entry name" value="cNMP"/>
    <property type="match status" value="1"/>
</dbReference>
<dbReference type="SMART" id="SM00419">
    <property type="entry name" value="HTH_CRP"/>
    <property type="match status" value="1"/>
</dbReference>
<dbReference type="SUPFAM" id="SSF51206">
    <property type="entry name" value="cAMP-binding domain-like"/>
    <property type="match status" value="1"/>
</dbReference>
<dbReference type="SUPFAM" id="SSF46785">
    <property type="entry name" value="Winged helix' DNA-binding domain"/>
    <property type="match status" value="1"/>
</dbReference>
<dbReference type="PROSITE" id="PS50042">
    <property type="entry name" value="CNMP_BINDING_3"/>
    <property type="match status" value="1"/>
</dbReference>
<dbReference type="PROSITE" id="PS00042">
    <property type="entry name" value="HTH_CRP_1"/>
    <property type="match status" value="1"/>
</dbReference>
<dbReference type="PROSITE" id="PS51063">
    <property type="entry name" value="HTH_CRP_2"/>
    <property type="match status" value="1"/>
</dbReference>
<organism>
    <name type="scientific">Rhizobium meliloti (strain 1021)</name>
    <name type="common">Ensifer meliloti</name>
    <name type="synonym">Sinorhizobium meliloti</name>
    <dbReference type="NCBI Taxonomy" id="266834"/>
    <lineage>
        <taxon>Bacteria</taxon>
        <taxon>Pseudomonadati</taxon>
        <taxon>Pseudomonadota</taxon>
        <taxon>Alphaproteobacteria</taxon>
        <taxon>Hyphomicrobiales</taxon>
        <taxon>Rhizobiaceae</taxon>
        <taxon>Sinorhizobium/Ensifer group</taxon>
        <taxon>Sinorhizobium</taxon>
    </lineage>
</organism>
<name>FIXK_RHIME</name>
<reference key="1">
    <citation type="journal article" date="1989" name="EMBO J.">
        <title>fixK, a gene homologous with fnr and crp from Escherichia coli, regulates nitrogen fixation genes both positively and negatively in Rhizobium meliloti.</title>
        <authorList>
            <person name="Batut J."/>
            <person name="Daveran-Mingot M.-L."/>
            <person name="David M."/>
            <person name="Jacobs J."/>
            <person name="Garnerone A.-M."/>
            <person name="Kahn D."/>
        </authorList>
    </citation>
    <scope>NUCLEOTIDE SEQUENCE [GENOMIC DNA]</scope>
</reference>
<reference key="2">
    <citation type="journal article" date="2001" name="Proc. Natl. Acad. Sci. U.S.A.">
        <title>Nucleotide sequence and predicted functions of the entire Sinorhizobium meliloti pSymA megaplasmid.</title>
        <authorList>
            <person name="Barnett M.J."/>
            <person name="Fisher R.F."/>
            <person name="Jones T."/>
            <person name="Komp C."/>
            <person name="Abola A.P."/>
            <person name="Barloy-Hubler F."/>
            <person name="Bowser L."/>
            <person name="Capela D."/>
            <person name="Galibert F."/>
            <person name="Gouzy J."/>
            <person name="Gurjal M."/>
            <person name="Hong A."/>
            <person name="Huizar L."/>
            <person name="Hyman R.W."/>
            <person name="Kahn D."/>
            <person name="Kahn M.L."/>
            <person name="Kalman S."/>
            <person name="Keating D.H."/>
            <person name="Palm C."/>
            <person name="Peck M.C."/>
            <person name="Surzycki R."/>
            <person name="Wells D.H."/>
            <person name="Yeh K.-C."/>
            <person name="Davis R.W."/>
            <person name="Federspiel N.A."/>
            <person name="Long S.R."/>
        </authorList>
    </citation>
    <scope>NUCLEOTIDE SEQUENCE [LARGE SCALE GENOMIC DNA]</scope>
    <source>
        <strain>1021</strain>
    </source>
</reference>
<reference key="3">
    <citation type="journal article" date="2001" name="Science">
        <title>The composite genome of the legume symbiont Sinorhizobium meliloti.</title>
        <authorList>
            <person name="Galibert F."/>
            <person name="Finan T.M."/>
            <person name="Long S.R."/>
            <person name="Puehler A."/>
            <person name="Abola P."/>
            <person name="Ampe F."/>
            <person name="Barloy-Hubler F."/>
            <person name="Barnett M.J."/>
            <person name="Becker A."/>
            <person name="Boistard P."/>
            <person name="Bothe G."/>
            <person name="Boutry M."/>
            <person name="Bowser L."/>
            <person name="Buhrmester J."/>
            <person name="Cadieu E."/>
            <person name="Capela D."/>
            <person name="Chain P."/>
            <person name="Cowie A."/>
            <person name="Davis R.W."/>
            <person name="Dreano S."/>
            <person name="Federspiel N.A."/>
            <person name="Fisher R.F."/>
            <person name="Gloux S."/>
            <person name="Godrie T."/>
            <person name="Goffeau A."/>
            <person name="Golding B."/>
            <person name="Gouzy J."/>
            <person name="Gurjal M."/>
            <person name="Hernandez-Lucas I."/>
            <person name="Hong A."/>
            <person name="Huizar L."/>
            <person name="Hyman R.W."/>
            <person name="Jones T."/>
            <person name="Kahn D."/>
            <person name="Kahn M.L."/>
            <person name="Kalman S."/>
            <person name="Keating D.H."/>
            <person name="Kiss E."/>
            <person name="Komp C."/>
            <person name="Lelaure V."/>
            <person name="Masuy D."/>
            <person name="Palm C."/>
            <person name="Peck M.C."/>
            <person name="Pohl T.M."/>
            <person name="Portetelle D."/>
            <person name="Purnelle B."/>
            <person name="Ramsperger U."/>
            <person name="Surzycki R."/>
            <person name="Thebault P."/>
            <person name="Vandenbol M."/>
            <person name="Vorhoelter F.J."/>
            <person name="Weidner S."/>
            <person name="Wells D.H."/>
            <person name="Wong K."/>
            <person name="Yeh K.-C."/>
            <person name="Batut J."/>
        </authorList>
    </citation>
    <scope>NUCLEOTIDE SEQUENCE [LARGE SCALE GENOMIC DNA]</scope>
    <source>
        <strain>1021</strain>
    </source>
</reference>
<comment type="function">
    <text>FixK is a protein that regulates nitrogen fixation genes both positively and negatively. FixK appears to repress its own expression and that of nifA. FixK may bind DNA at the FNR consensus binding site.</text>
</comment>
<sequence length="211" mass="23478">MYAAAQAKPQSIEVEHLGPAPMSGPRLVATYKPGREIYAQGDLNDKCYQVSTGAVRIYRLLSDGRRQVVSFHLPGEMFGFEAGSNHSFFAEAITETTLAIFGRRNMQERSRELLALALTGMARAQQHLLVIGRQCAVERIAAFLVDLCERQGGGRQLRLPMSRQDIADYLGLTIETVSRVVTKLKERSLIALRDARTIDIMKPEALRSLCN</sequence>
<feature type="chain" id="PRO_0000100158" description="Nitrogen fixation regulation protein FixK">
    <location>
        <begin position="1"/>
        <end position="211"/>
    </location>
</feature>
<feature type="domain" description="HTH crp-type" evidence="1">
    <location>
        <begin position="134"/>
        <end position="204"/>
    </location>
</feature>
<feature type="DNA-binding region" description="H-T-H motif" evidence="1">
    <location>
        <begin position="163"/>
        <end position="182"/>
    </location>
</feature>
<geneLocation type="plasmid">
    <name>pSymA</name>
    <name>megaplasmid 1</name>
</geneLocation>
<evidence type="ECO:0000255" key="1">
    <source>
        <dbReference type="PROSITE-ProRule" id="PRU00387"/>
    </source>
</evidence>
<proteinExistence type="predicted"/>
<accession>P13295</accession>
<protein>
    <recommendedName>
        <fullName>Nitrogen fixation regulation protein FixK</fullName>
    </recommendedName>
</protein>
<keyword id="KW-0010">Activator</keyword>
<keyword id="KW-0238">DNA-binding</keyword>
<keyword id="KW-0535">Nitrogen fixation</keyword>
<keyword id="KW-0614">Plasmid</keyword>
<keyword id="KW-1185">Reference proteome</keyword>
<keyword id="KW-0678">Repressor</keyword>
<keyword id="KW-0804">Transcription</keyword>
<keyword id="KW-0805">Transcription regulation</keyword>